<sequence>MKKKNIYSIRKLGVGIASVTLGTLLISGGVTPAANAAQHDEAQQNAFYQVLNMPNLNADQRNGFIQSLKDDPSQSANVLGEAQKLNDSQAPKADAQQNNFNKDQQSAFYEILNMPNLNEAQRNGFIQSLKDDPSQSTNVLGEAKKLNESQAPKADNNFNKEQQNAFYEILNMPNLNEEQRNGFIQSLKDDPSQSANLLSEAKKLNESQAPKADNKFNKEQQNAFYEILHLPNLNEEQRNGFIQSLKDDPSVSKEILAEAKKLNDAQAPKEEDNKKPGKEDGNKPGKEDGNKPGKEDNKKPGKEDGNKPGKEDNNKPGKEDGNKPGKEDNNKPGKEDGNKPGKEDGNKPGKEDGNGVHVVKPGDTVNDIAKANGTTADKIAADNKLADKNMIKPGQELVVDKKQPANHADANKAQALPETGEENPFIGTTVFGGLSLALGAALLAGRRREL</sequence>
<dbReference type="EMBL" id="BA000017">
    <property type="protein sequence ID" value="BAB56273.1"/>
    <property type="molecule type" value="Genomic_DNA"/>
</dbReference>
<dbReference type="RefSeq" id="WP_000728765.1">
    <property type="nucleotide sequence ID" value="NC_002758.2"/>
</dbReference>
<dbReference type="PDB" id="4HJG">
    <property type="method" value="X-ray"/>
    <property type="resolution" value="2.00 A"/>
    <property type="chains" value="H=101-151"/>
</dbReference>
<dbReference type="PDB" id="4HKZ">
    <property type="method" value="X-ray"/>
    <property type="resolution" value="2.08 A"/>
    <property type="chains" value="H=101-151"/>
</dbReference>
<dbReference type="PDB" id="4IOI">
    <property type="method" value="X-ray"/>
    <property type="resolution" value="1.95 A"/>
    <property type="chains" value="H=101-151"/>
</dbReference>
<dbReference type="PDB" id="8JXS">
    <property type="method" value="EM"/>
    <property type="resolution" value="3.00 A"/>
    <property type="chains" value="C=120-151"/>
</dbReference>
<dbReference type="PDBsum" id="4HJG"/>
<dbReference type="PDBsum" id="4HKZ"/>
<dbReference type="PDBsum" id="4IOI"/>
<dbReference type="PDBsum" id="8JXS"/>
<dbReference type="SMR" id="P0A015"/>
<dbReference type="ABCD" id="P0A015">
    <property type="antibodies" value="1 sequenced antibody"/>
</dbReference>
<dbReference type="KEGG" id="sav:SAV0111"/>
<dbReference type="HOGENOM" id="CLU_024983_1_0_9"/>
<dbReference type="EvolutionaryTrace" id="P0A015"/>
<dbReference type="PRO" id="PR:P0A015"/>
<dbReference type="Proteomes" id="UP000002481">
    <property type="component" value="Chromosome"/>
</dbReference>
<dbReference type="GO" id="GO:0005576">
    <property type="term" value="C:extracellular region"/>
    <property type="evidence" value="ECO:0007669"/>
    <property type="project" value="UniProtKB-KW"/>
</dbReference>
<dbReference type="GO" id="GO:0019864">
    <property type="term" value="F:IgG binding"/>
    <property type="evidence" value="ECO:0007669"/>
    <property type="project" value="UniProtKB-KW"/>
</dbReference>
<dbReference type="CDD" id="cd00118">
    <property type="entry name" value="LysM"/>
    <property type="match status" value="1"/>
</dbReference>
<dbReference type="FunFam" id="1.20.5.420:FF:000003">
    <property type="entry name" value="Immunoglobulin G-binding protein A"/>
    <property type="match status" value="2"/>
</dbReference>
<dbReference type="Gene3D" id="1.20.5.420">
    <property type="entry name" value="Immunoglobulin FC, subunit C"/>
    <property type="match status" value="4"/>
</dbReference>
<dbReference type="Gene3D" id="3.10.350.10">
    <property type="entry name" value="LysM domain"/>
    <property type="match status" value="1"/>
</dbReference>
<dbReference type="InterPro" id="IPR009063">
    <property type="entry name" value="Ig/albumin-bd_sf"/>
</dbReference>
<dbReference type="InterPro" id="IPR019931">
    <property type="entry name" value="LPXTG_anchor"/>
</dbReference>
<dbReference type="InterPro" id="IPR018392">
    <property type="entry name" value="LysM_dom"/>
</dbReference>
<dbReference type="InterPro" id="IPR036779">
    <property type="entry name" value="LysM_dom_sf"/>
</dbReference>
<dbReference type="InterPro" id="IPR005038">
    <property type="entry name" value="Octapeptide"/>
</dbReference>
<dbReference type="InterPro" id="IPR003132">
    <property type="entry name" value="Protein_A_Ig-bd"/>
</dbReference>
<dbReference type="InterPro" id="IPR005877">
    <property type="entry name" value="YSIRK_signal_dom"/>
</dbReference>
<dbReference type="NCBIfam" id="TIGR01167">
    <property type="entry name" value="LPXTG_anchor"/>
    <property type="match status" value="1"/>
</dbReference>
<dbReference type="NCBIfam" id="TIGR01168">
    <property type="entry name" value="YSIRK_signal"/>
    <property type="match status" value="1"/>
</dbReference>
<dbReference type="Pfam" id="PF02216">
    <property type="entry name" value="B"/>
    <property type="match status" value="4"/>
</dbReference>
<dbReference type="Pfam" id="PF00746">
    <property type="entry name" value="Gram_pos_anchor"/>
    <property type="match status" value="1"/>
</dbReference>
<dbReference type="Pfam" id="PF01476">
    <property type="entry name" value="LysM"/>
    <property type="match status" value="1"/>
</dbReference>
<dbReference type="Pfam" id="PF03373">
    <property type="entry name" value="Octapeptide"/>
    <property type="match status" value="10"/>
</dbReference>
<dbReference type="Pfam" id="PF04650">
    <property type="entry name" value="YSIRK_signal"/>
    <property type="match status" value="1"/>
</dbReference>
<dbReference type="SMART" id="SM00257">
    <property type="entry name" value="LysM"/>
    <property type="match status" value="1"/>
</dbReference>
<dbReference type="SUPFAM" id="SSF46997">
    <property type="entry name" value="Bacterial immunoglobulin/albumin-binding domains"/>
    <property type="match status" value="4"/>
</dbReference>
<dbReference type="SUPFAM" id="SSF54106">
    <property type="entry name" value="LysM domain"/>
    <property type="match status" value="1"/>
</dbReference>
<dbReference type="PROSITE" id="PS50847">
    <property type="entry name" value="GRAM_POS_ANCHORING"/>
    <property type="match status" value="1"/>
</dbReference>
<dbReference type="PROSITE" id="PS51782">
    <property type="entry name" value="LYSM"/>
    <property type="match status" value="1"/>
</dbReference>
<comment type="function">
    <text evidence="1 2">Plays a role in the inhibition of the host innate and adaptive immune responses. Possesses five immunoglobulin-binding domains that capture both the fragment crystallizable region (Fc region) and the Fab region (part of Ig that identifies antigen) of immunoglobulins (By similarity). In turn, Staphylococcus aureus is protected from phagocytic killing via inhibition of Ig Fc region. In addition, the host elicited B-cell response is prevented due to a decrease of antibody-secreting cell proliferation that enter the bone marrow, thereby decreasing long-term antibody production. Inhibits osteogenesis by preventing osteoblast proliferation and expression of alkaline phosphatase, type I collagen, osteopontin and osteocalcin. Acts directly as a pro-inflammatory factor in the lung through its ability to bind and activate tumor necrosis factor alpha receptor 1/TNFRSF1A (By similarity).</text>
</comment>
<comment type="subunit">
    <text evidence="1">Interacts with host TNFRSF1A; this interaction leads to the stimulation of both surface expression and shedding of TNFRSF1A.</text>
</comment>
<comment type="subcellular location">
    <subcellularLocation>
        <location evidence="4">Secreted</location>
        <location evidence="4">Cell wall</location>
        <topology evidence="4">Peptidoglycan-anchor</topology>
    </subcellularLocation>
    <text evidence="2">Anchored to the cell wall by sortase A.</text>
</comment>
<comment type="domain">
    <text evidence="2">Each of the immunoglobulin-binding region repeats can bind the Fc region of an immunoglobulin.</text>
</comment>
<comment type="biotechnology">
    <text evidence="7">Important immunodiagnostic reagent because of its ability to bind the Fab and Fc fragments of a wide range of mammalian immunoglobulins.</text>
</comment>
<comment type="miscellaneous">
    <text evidence="7">Unlike many other strains of S.aureus, SpA has only 4 Ig-binding domains in Mu50.</text>
</comment>
<comment type="similarity">
    <text evidence="7">Belongs to the immunoglobulin-binding protein SpA family.</text>
</comment>
<organism>
    <name type="scientific">Staphylococcus aureus (strain Mu50 / ATCC 700699)</name>
    <dbReference type="NCBI Taxonomy" id="158878"/>
    <lineage>
        <taxon>Bacteria</taxon>
        <taxon>Bacillati</taxon>
        <taxon>Bacillota</taxon>
        <taxon>Bacilli</taxon>
        <taxon>Bacillales</taxon>
        <taxon>Staphylococcaceae</taxon>
        <taxon>Staphylococcus</taxon>
    </lineage>
</organism>
<reference key="1">
    <citation type="journal article" date="2001" name="Lancet">
        <title>Whole genome sequencing of meticillin-resistant Staphylococcus aureus.</title>
        <authorList>
            <person name="Kuroda M."/>
            <person name="Ohta T."/>
            <person name="Uchiyama I."/>
            <person name="Baba T."/>
            <person name="Yuzawa H."/>
            <person name="Kobayashi I."/>
            <person name="Cui L."/>
            <person name="Oguchi A."/>
            <person name="Aoki K."/>
            <person name="Nagai Y."/>
            <person name="Lian J.-Q."/>
            <person name="Ito T."/>
            <person name="Kanamori M."/>
            <person name="Matsumaru H."/>
            <person name="Maruyama A."/>
            <person name="Murakami H."/>
            <person name="Hosoyama A."/>
            <person name="Mizutani-Ui Y."/>
            <person name="Takahashi N.K."/>
            <person name="Sawano T."/>
            <person name="Inoue R."/>
            <person name="Kaito C."/>
            <person name="Sekimizu K."/>
            <person name="Hirakawa H."/>
            <person name="Kuhara S."/>
            <person name="Goto S."/>
            <person name="Yabuzaki J."/>
            <person name="Kanehisa M."/>
            <person name="Yamashita A."/>
            <person name="Oshima K."/>
            <person name="Furuya K."/>
            <person name="Yoshino C."/>
            <person name="Shiba T."/>
            <person name="Hattori M."/>
            <person name="Ogasawara N."/>
            <person name="Hayashi H."/>
            <person name="Hiramatsu K."/>
        </authorList>
    </citation>
    <scope>NUCLEOTIDE SEQUENCE [LARGE SCALE GENOMIC DNA]</scope>
    <source>
        <strain>Mu50 / ATCC 700699</strain>
    </source>
</reference>
<proteinExistence type="evidence at protein level"/>
<name>SPA_STAAM</name>
<protein>
    <recommendedName>
        <fullName>Immunoglobulin G-binding protein A</fullName>
        <shortName>IgG-binding protein A</shortName>
    </recommendedName>
    <alternativeName>
        <fullName>Staphylococcal protein A</fullName>
        <shortName>SpA</shortName>
    </alternativeName>
</protein>
<feature type="signal peptide" evidence="3">
    <location>
        <begin position="1"/>
        <end position="36"/>
    </location>
</feature>
<feature type="chain" id="PRO_0000005649" description="Immunoglobulin G-binding protein A">
    <location>
        <begin position="37"/>
        <end position="419"/>
    </location>
</feature>
<feature type="propeptide" id="PRO_0000005650" description="Removed by sortase" evidence="2 4">
    <location>
        <begin position="420"/>
        <end position="450"/>
    </location>
</feature>
<feature type="repeat" description="Immunoglobulin-binding region E" evidence="2">
    <location>
        <begin position="37"/>
        <end position="92"/>
    </location>
</feature>
<feature type="repeat" description="Immunoglobulin-binding region D" evidence="2">
    <location>
        <begin position="93"/>
        <end position="153"/>
    </location>
</feature>
<feature type="repeat" description="Immunoglobulin-binding region A" evidence="2">
    <location>
        <begin position="154"/>
        <end position="211"/>
    </location>
</feature>
<feature type="repeat" description="Immunoglobulin-binding region B/C" evidence="7">
    <location>
        <begin position="212"/>
        <end position="269"/>
    </location>
</feature>
<feature type="repeat" description="2-1">
    <location>
        <begin position="268"/>
        <end position="275"/>
    </location>
</feature>
<feature type="repeat" description="2-2">
    <location>
        <begin position="276"/>
        <end position="283"/>
    </location>
</feature>
<feature type="repeat" description="2-3">
    <location>
        <begin position="284"/>
        <end position="291"/>
    </location>
</feature>
<feature type="repeat" description="2-4">
    <location>
        <begin position="292"/>
        <end position="299"/>
    </location>
</feature>
<feature type="repeat" description="2-5">
    <location>
        <begin position="300"/>
        <end position="307"/>
    </location>
</feature>
<feature type="repeat" description="2-6">
    <location>
        <begin position="308"/>
        <end position="315"/>
    </location>
</feature>
<feature type="repeat" description="2-7">
    <location>
        <begin position="316"/>
        <end position="323"/>
    </location>
</feature>
<feature type="repeat" description="2-8">
    <location>
        <begin position="324"/>
        <end position="331"/>
    </location>
</feature>
<feature type="repeat" description="2-9">
    <location>
        <begin position="332"/>
        <end position="339"/>
    </location>
</feature>
<feature type="repeat" description="2-10">
    <location>
        <begin position="340"/>
        <end position="347"/>
    </location>
</feature>
<feature type="repeat" description="2-11">
    <location>
        <begin position="348"/>
        <end position="355"/>
    </location>
</feature>
<feature type="domain" description="LysM" evidence="5">
    <location>
        <begin position="355"/>
        <end position="399"/>
    </location>
</feature>
<feature type="region of interest" description="Disordered" evidence="6">
    <location>
        <begin position="260"/>
        <end position="365"/>
    </location>
</feature>
<feature type="region of interest" description="12 X 8 AA approximate tandem repeats">
    <location>
        <begin position="268"/>
        <end position="355"/>
    </location>
</feature>
<feature type="region of interest" description="Disordered" evidence="6">
    <location>
        <begin position="401"/>
        <end position="421"/>
    </location>
</feature>
<feature type="short sequence motif" description="YSIRK-G/S signaling motif" evidence="2">
    <location>
        <begin position="7"/>
        <end position="18"/>
    </location>
</feature>
<feature type="short sequence motif" description="LPXTG sorting signal" evidence="4">
    <location>
        <begin position="416"/>
        <end position="420"/>
    </location>
</feature>
<feature type="compositionally biased region" description="Basic and acidic residues" evidence="6">
    <location>
        <begin position="260"/>
        <end position="354"/>
    </location>
</feature>
<feature type="modified residue" description="Pentaglycyl murein peptidoglycan amidated threonine" evidence="4">
    <location>
        <position position="419"/>
    </location>
</feature>
<feature type="strand" evidence="9">
    <location>
        <begin position="54"/>
        <end position="56"/>
    </location>
</feature>
<feature type="helix" evidence="9">
    <location>
        <begin position="60"/>
        <end position="69"/>
    </location>
</feature>
<feature type="helix" evidence="9">
    <location>
        <begin position="79"/>
        <end position="82"/>
    </location>
</feature>
<feature type="helix" evidence="9">
    <location>
        <begin position="84"/>
        <end position="88"/>
    </location>
</feature>
<feature type="helix" evidence="8">
    <location>
        <begin position="102"/>
        <end position="113"/>
    </location>
</feature>
<feature type="helix" evidence="8">
    <location>
        <begin position="119"/>
        <end position="131"/>
    </location>
</feature>
<feature type="helix" evidence="8">
    <location>
        <begin position="133"/>
        <end position="135"/>
    </location>
</feature>
<feature type="helix" evidence="8">
    <location>
        <begin position="136"/>
        <end position="149"/>
    </location>
</feature>
<evidence type="ECO:0000250" key="1">
    <source>
        <dbReference type="UniProtKB" id="A0A0H3K686"/>
    </source>
</evidence>
<evidence type="ECO:0000250" key="2">
    <source>
        <dbReference type="UniProtKB" id="P02976"/>
    </source>
</evidence>
<evidence type="ECO:0000255" key="3"/>
<evidence type="ECO:0000255" key="4">
    <source>
        <dbReference type="PROSITE-ProRule" id="PRU00477"/>
    </source>
</evidence>
<evidence type="ECO:0000255" key="5">
    <source>
        <dbReference type="PROSITE-ProRule" id="PRU01118"/>
    </source>
</evidence>
<evidence type="ECO:0000256" key="6">
    <source>
        <dbReference type="SAM" id="MobiDB-lite"/>
    </source>
</evidence>
<evidence type="ECO:0000305" key="7"/>
<evidence type="ECO:0007829" key="8">
    <source>
        <dbReference type="PDB" id="4IOI"/>
    </source>
</evidence>
<evidence type="ECO:0007829" key="9">
    <source>
        <dbReference type="PDB" id="8JXS"/>
    </source>
</evidence>
<gene>
    <name type="primary">spa</name>
    <name type="ordered locus">SAV0111</name>
</gene>
<keyword id="KW-0002">3D-structure</keyword>
<keyword id="KW-0134">Cell wall</keyword>
<keyword id="KW-0390">IgG-binding protein</keyword>
<keyword id="KW-0572">Peptidoglycan-anchor</keyword>
<keyword id="KW-0677">Repeat</keyword>
<keyword id="KW-0964">Secreted</keyword>
<keyword id="KW-0732">Signal</keyword>
<keyword id="KW-0843">Virulence</keyword>
<accession>P0A015</accession>
<accession>Q99XA2</accession>